<sequence length="208" mass="22861">MELKVLNTGGSETGEVVTLNDAVFSAEVSEHAMYLDVKSIMANRRQGTHKAKNRSEVRGGGRKPYRQKGTGHARQGSTRSPLMTGGGTIFGPEPRDYGLKVNKKVKKLARRSALTNKANEGGIVVVEDFVFDQIKTRQMAEVLKNLGLDSRKTLMLMPEHNDIIVRSGRNIPKLQVVVADNASTYDILDSQTVLVQKTALKKIEETLG</sequence>
<organism>
    <name type="scientific">Chlorobium phaeobacteroides (strain BS1)</name>
    <dbReference type="NCBI Taxonomy" id="331678"/>
    <lineage>
        <taxon>Bacteria</taxon>
        <taxon>Pseudomonadati</taxon>
        <taxon>Chlorobiota</taxon>
        <taxon>Chlorobiia</taxon>
        <taxon>Chlorobiales</taxon>
        <taxon>Chlorobiaceae</taxon>
        <taxon>Chlorobium/Pelodictyon group</taxon>
        <taxon>Chlorobium</taxon>
    </lineage>
</organism>
<evidence type="ECO:0000255" key="1">
    <source>
        <dbReference type="HAMAP-Rule" id="MF_01328"/>
    </source>
</evidence>
<evidence type="ECO:0000256" key="2">
    <source>
        <dbReference type="SAM" id="MobiDB-lite"/>
    </source>
</evidence>
<evidence type="ECO:0000305" key="3"/>
<gene>
    <name evidence="1" type="primary">rplD</name>
    <name type="ordered locus">Cphamn1_2295</name>
</gene>
<keyword id="KW-0687">Ribonucleoprotein</keyword>
<keyword id="KW-0689">Ribosomal protein</keyword>
<keyword id="KW-0694">RNA-binding</keyword>
<keyword id="KW-0699">rRNA-binding</keyword>
<reference key="1">
    <citation type="submission" date="2008-06" db="EMBL/GenBank/DDBJ databases">
        <title>Complete sequence of Chlorobium phaeobacteroides BS1.</title>
        <authorList>
            <consortium name="US DOE Joint Genome Institute"/>
            <person name="Lucas S."/>
            <person name="Copeland A."/>
            <person name="Lapidus A."/>
            <person name="Glavina del Rio T."/>
            <person name="Dalin E."/>
            <person name="Tice H."/>
            <person name="Bruce D."/>
            <person name="Goodwin L."/>
            <person name="Pitluck S."/>
            <person name="Schmutz J."/>
            <person name="Larimer F."/>
            <person name="Land M."/>
            <person name="Hauser L."/>
            <person name="Kyrpides N."/>
            <person name="Ovchinnikova G."/>
            <person name="Li T."/>
            <person name="Liu Z."/>
            <person name="Zhao F."/>
            <person name="Overmann J."/>
            <person name="Bryant D.A."/>
            <person name="Richardson P."/>
        </authorList>
    </citation>
    <scope>NUCLEOTIDE SEQUENCE [LARGE SCALE GENOMIC DNA]</scope>
    <source>
        <strain>BS1</strain>
    </source>
</reference>
<accession>B3EP60</accession>
<dbReference type="EMBL" id="CP001101">
    <property type="protein sequence ID" value="ACE05199.1"/>
    <property type="molecule type" value="Genomic_DNA"/>
</dbReference>
<dbReference type="SMR" id="B3EP60"/>
<dbReference type="STRING" id="331678.Cphamn1_2295"/>
<dbReference type="KEGG" id="cpb:Cphamn1_2295"/>
<dbReference type="eggNOG" id="COG0088">
    <property type="taxonomic scope" value="Bacteria"/>
</dbReference>
<dbReference type="HOGENOM" id="CLU_041575_5_2_10"/>
<dbReference type="OrthoDB" id="9803201at2"/>
<dbReference type="GO" id="GO:1990904">
    <property type="term" value="C:ribonucleoprotein complex"/>
    <property type="evidence" value="ECO:0007669"/>
    <property type="project" value="UniProtKB-KW"/>
</dbReference>
<dbReference type="GO" id="GO:0005840">
    <property type="term" value="C:ribosome"/>
    <property type="evidence" value="ECO:0007669"/>
    <property type="project" value="UniProtKB-KW"/>
</dbReference>
<dbReference type="GO" id="GO:0019843">
    <property type="term" value="F:rRNA binding"/>
    <property type="evidence" value="ECO:0007669"/>
    <property type="project" value="UniProtKB-UniRule"/>
</dbReference>
<dbReference type="GO" id="GO:0003735">
    <property type="term" value="F:structural constituent of ribosome"/>
    <property type="evidence" value="ECO:0007669"/>
    <property type="project" value="InterPro"/>
</dbReference>
<dbReference type="GO" id="GO:0006412">
    <property type="term" value="P:translation"/>
    <property type="evidence" value="ECO:0007669"/>
    <property type="project" value="UniProtKB-UniRule"/>
</dbReference>
<dbReference type="Gene3D" id="3.40.1370.10">
    <property type="match status" value="1"/>
</dbReference>
<dbReference type="HAMAP" id="MF_01328_B">
    <property type="entry name" value="Ribosomal_uL4_B"/>
    <property type="match status" value="1"/>
</dbReference>
<dbReference type="InterPro" id="IPR002136">
    <property type="entry name" value="Ribosomal_uL4"/>
</dbReference>
<dbReference type="InterPro" id="IPR013005">
    <property type="entry name" value="Ribosomal_uL4-like"/>
</dbReference>
<dbReference type="InterPro" id="IPR023574">
    <property type="entry name" value="Ribosomal_uL4_dom_sf"/>
</dbReference>
<dbReference type="NCBIfam" id="TIGR03953">
    <property type="entry name" value="rplD_bact"/>
    <property type="match status" value="1"/>
</dbReference>
<dbReference type="PANTHER" id="PTHR10746">
    <property type="entry name" value="50S RIBOSOMAL PROTEIN L4"/>
    <property type="match status" value="1"/>
</dbReference>
<dbReference type="PANTHER" id="PTHR10746:SF6">
    <property type="entry name" value="LARGE RIBOSOMAL SUBUNIT PROTEIN UL4M"/>
    <property type="match status" value="1"/>
</dbReference>
<dbReference type="Pfam" id="PF00573">
    <property type="entry name" value="Ribosomal_L4"/>
    <property type="match status" value="1"/>
</dbReference>
<dbReference type="SUPFAM" id="SSF52166">
    <property type="entry name" value="Ribosomal protein L4"/>
    <property type="match status" value="1"/>
</dbReference>
<protein>
    <recommendedName>
        <fullName evidence="1">Large ribosomal subunit protein uL4</fullName>
    </recommendedName>
    <alternativeName>
        <fullName evidence="3">50S ribosomal protein L4</fullName>
    </alternativeName>
</protein>
<proteinExistence type="inferred from homology"/>
<feature type="chain" id="PRO_1000142100" description="Large ribosomal subunit protein uL4">
    <location>
        <begin position="1"/>
        <end position="208"/>
    </location>
</feature>
<feature type="region of interest" description="Disordered" evidence="2">
    <location>
        <begin position="44"/>
        <end position="89"/>
    </location>
</feature>
<feature type="compositionally biased region" description="Basic residues" evidence="2">
    <location>
        <begin position="60"/>
        <end position="71"/>
    </location>
</feature>
<name>RL4_CHLPB</name>
<comment type="function">
    <text evidence="1">One of the primary rRNA binding proteins, this protein initially binds near the 5'-end of the 23S rRNA. It is important during the early stages of 50S assembly. It makes multiple contacts with different domains of the 23S rRNA in the assembled 50S subunit and ribosome.</text>
</comment>
<comment type="function">
    <text evidence="1">Forms part of the polypeptide exit tunnel.</text>
</comment>
<comment type="subunit">
    <text evidence="1">Part of the 50S ribosomal subunit.</text>
</comment>
<comment type="similarity">
    <text evidence="1">Belongs to the universal ribosomal protein uL4 family.</text>
</comment>